<proteinExistence type="inferred from homology"/>
<evidence type="ECO:0000255" key="1">
    <source>
        <dbReference type="HAMAP-Rule" id="MF_00102"/>
    </source>
</evidence>
<evidence type="ECO:0000305" key="2"/>
<organism>
    <name type="scientific">Ruegeria sp. (strain TM1040)</name>
    <name type="common">Silicibacter sp.</name>
    <dbReference type="NCBI Taxonomy" id="292414"/>
    <lineage>
        <taxon>Bacteria</taxon>
        <taxon>Pseudomonadati</taxon>
        <taxon>Pseudomonadota</taxon>
        <taxon>Alphaproteobacteria</taxon>
        <taxon>Rhodobacterales</taxon>
        <taxon>Roseobacteraceae</taxon>
        <taxon>Ruegeria</taxon>
    </lineage>
</organism>
<name>DAPB_RUEST</name>
<sequence length="269" mass="27559">MTDKPGIVITGASGRMGQMLIKTVLDSDKAELAGVVEREGHDWVGQDIGIAMGGAALGVVVTDDAGSAFAGAQAVIDFTAPQATIAFSKLAAEAGCVHVIGTTGMSEAEIAQLDPAAQDTVLVRAGNMSLGVNLLVQLTKKVAAALDEDFDIEVIEAHHHHKVDAPSGTALMLGEAAAEGRGVALAEVSDRGRDGITGARKKGDIGFSAIRGGDIVGEHDVLFAAAGERIVLRHMATDRAIFARGALKAALWGQGKDAGAYDMIDVLGL</sequence>
<keyword id="KW-0028">Amino-acid biosynthesis</keyword>
<keyword id="KW-0963">Cytoplasm</keyword>
<keyword id="KW-0220">Diaminopimelate biosynthesis</keyword>
<keyword id="KW-0457">Lysine biosynthesis</keyword>
<keyword id="KW-0520">NAD</keyword>
<keyword id="KW-0521">NADP</keyword>
<keyword id="KW-0560">Oxidoreductase</keyword>
<keyword id="KW-1185">Reference proteome</keyword>
<gene>
    <name evidence="1" type="primary">dapB</name>
    <name type="ordered locus">TM1040_0087</name>
</gene>
<accession>Q1GKJ6</accession>
<feature type="chain" id="PRO_1000008642" description="4-hydroxy-tetrahydrodipicolinate reductase">
    <location>
        <begin position="1"/>
        <end position="269"/>
    </location>
</feature>
<feature type="active site" description="Proton donor/acceptor" evidence="1">
    <location>
        <position position="158"/>
    </location>
</feature>
<feature type="active site" description="Proton donor" evidence="1">
    <location>
        <position position="162"/>
    </location>
</feature>
<feature type="binding site" evidence="1">
    <location>
        <begin position="11"/>
        <end position="16"/>
    </location>
    <ligand>
        <name>NAD(+)</name>
        <dbReference type="ChEBI" id="CHEBI:57540"/>
    </ligand>
</feature>
<feature type="binding site" evidence="1">
    <location>
        <position position="37"/>
    </location>
    <ligand>
        <name>NAD(+)</name>
        <dbReference type="ChEBI" id="CHEBI:57540"/>
    </ligand>
</feature>
<feature type="binding site" evidence="1">
    <location>
        <position position="38"/>
    </location>
    <ligand>
        <name>NADP(+)</name>
        <dbReference type="ChEBI" id="CHEBI:58349"/>
    </ligand>
</feature>
<feature type="binding site" evidence="1">
    <location>
        <begin position="101"/>
        <end position="103"/>
    </location>
    <ligand>
        <name>NAD(+)</name>
        <dbReference type="ChEBI" id="CHEBI:57540"/>
    </ligand>
</feature>
<feature type="binding site" evidence="1">
    <location>
        <begin position="125"/>
        <end position="128"/>
    </location>
    <ligand>
        <name>NAD(+)</name>
        <dbReference type="ChEBI" id="CHEBI:57540"/>
    </ligand>
</feature>
<feature type="binding site" evidence="1">
    <location>
        <position position="159"/>
    </location>
    <ligand>
        <name>(S)-2,3,4,5-tetrahydrodipicolinate</name>
        <dbReference type="ChEBI" id="CHEBI:16845"/>
    </ligand>
</feature>
<feature type="binding site" evidence="1">
    <location>
        <begin position="168"/>
        <end position="169"/>
    </location>
    <ligand>
        <name>(S)-2,3,4,5-tetrahydrodipicolinate</name>
        <dbReference type="ChEBI" id="CHEBI:16845"/>
    </ligand>
</feature>
<protein>
    <recommendedName>
        <fullName evidence="1">4-hydroxy-tetrahydrodipicolinate reductase</fullName>
        <shortName evidence="1">HTPA reductase</shortName>
        <ecNumber evidence="1">1.17.1.8</ecNumber>
    </recommendedName>
</protein>
<dbReference type="EC" id="1.17.1.8" evidence="1"/>
<dbReference type="EMBL" id="CP000377">
    <property type="protein sequence ID" value="ABF62820.1"/>
    <property type="molecule type" value="Genomic_DNA"/>
</dbReference>
<dbReference type="RefSeq" id="WP_011537456.1">
    <property type="nucleotide sequence ID" value="NC_008044.1"/>
</dbReference>
<dbReference type="SMR" id="Q1GKJ6"/>
<dbReference type="STRING" id="292414.TM1040_0087"/>
<dbReference type="KEGG" id="sit:TM1040_0087"/>
<dbReference type="eggNOG" id="COG0289">
    <property type="taxonomic scope" value="Bacteria"/>
</dbReference>
<dbReference type="HOGENOM" id="CLU_047479_2_1_5"/>
<dbReference type="OrthoDB" id="9790352at2"/>
<dbReference type="UniPathway" id="UPA00034">
    <property type="reaction ID" value="UER00018"/>
</dbReference>
<dbReference type="Proteomes" id="UP000000636">
    <property type="component" value="Chromosome"/>
</dbReference>
<dbReference type="GO" id="GO:0005829">
    <property type="term" value="C:cytosol"/>
    <property type="evidence" value="ECO:0007669"/>
    <property type="project" value="TreeGrafter"/>
</dbReference>
<dbReference type="GO" id="GO:0008839">
    <property type="term" value="F:4-hydroxy-tetrahydrodipicolinate reductase"/>
    <property type="evidence" value="ECO:0007669"/>
    <property type="project" value="UniProtKB-EC"/>
</dbReference>
<dbReference type="GO" id="GO:0051287">
    <property type="term" value="F:NAD binding"/>
    <property type="evidence" value="ECO:0007669"/>
    <property type="project" value="UniProtKB-UniRule"/>
</dbReference>
<dbReference type="GO" id="GO:0050661">
    <property type="term" value="F:NADP binding"/>
    <property type="evidence" value="ECO:0007669"/>
    <property type="project" value="UniProtKB-UniRule"/>
</dbReference>
<dbReference type="GO" id="GO:0016726">
    <property type="term" value="F:oxidoreductase activity, acting on CH or CH2 groups, NAD or NADP as acceptor"/>
    <property type="evidence" value="ECO:0007669"/>
    <property type="project" value="UniProtKB-UniRule"/>
</dbReference>
<dbReference type="GO" id="GO:0019877">
    <property type="term" value="P:diaminopimelate biosynthetic process"/>
    <property type="evidence" value="ECO:0007669"/>
    <property type="project" value="UniProtKB-UniRule"/>
</dbReference>
<dbReference type="GO" id="GO:0009089">
    <property type="term" value="P:lysine biosynthetic process via diaminopimelate"/>
    <property type="evidence" value="ECO:0007669"/>
    <property type="project" value="UniProtKB-UniRule"/>
</dbReference>
<dbReference type="CDD" id="cd02274">
    <property type="entry name" value="DHDPR_N"/>
    <property type="match status" value="1"/>
</dbReference>
<dbReference type="FunFam" id="3.30.360.10:FF:000004">
    <property type="entry name" value="4-hydroxy-tetrahydrodipicolinate reductase"/>
    <property type="match status" value="1"/>
</dbReference>
<dbReference type="Gene3D" id="3.30.360.10">
    <property type="entry name" value="Dihydrodipicolinate Reductase, domain 2"/>
    <property type="match status" value="1"/>
</dbReference>
<dbReference type="Gene3D" id="3.40.50.720">
    <property type="entry name" value="NAD(P)-binding Rossmann-like Domain"/>
    <property type="match status" value="1"/>
</dbReference>
<dbReference type="HAMAP" id="MF_00102">
    <property type="entry name" value="DapB"/>
    <property type="match status" value="1"/>
</dbReference>
<dbReference type="InterPro" id="IPR022663">
    <property type="entry name" value="DapB_C"/>
</dbReference>
<dbReference type="InterPro" id="IPR000846">
    <property type="entry name" value="DapB_N"/>
</dbReference>
<dbReference type="InterPro" id="IPR022664">
    <property type="entry name" value="DapB_N_CS"/>
</dbReference>
<dbReference type="InterPro" id="IPR023940">
    <property type="entry name" value="DHDPR_bac"/>
</dbReference>
<dbReference type="InterPro" id="IPR036291">
    <property type="entry name" value="NAD(P)-bd_dom_sf"/>
</dbReference>
<dbReference type="NCBIfam" id="TIGR00036">
    <property type="entry name" value="dapB"/>
    <property type="match status" value="1"/>
</dbReference>
<dbReference type="PANTHER" id="PTHR20836:SF0">
    <property type="entry name" value="4-HYDROXY-TETRAHYDRODIPICOLINATE REDUCTASE 1, CHLOROPLASTIC-RELATED"/>
    <property type="match status" value="1"/>
</dbReference>
<dbReference type="PANTHER" id="PTHR20836">
    <property type="entry name" value="DIHYDRODIPICOLINATE REDUCTASE"/>
    <property type="match status" value="1"/>
</dbReference>
<dbReference type="Pfam" id="PF05173">
    <property type="entry name" value="DapB_C"/>
    <property type="match status" value="1"/>
</dbReference>
<dbReference type="Pfam" id="PF01113">
    <property type="entry name" value="DapB_N"/>
    <property type="match status" value="1"/>
</dbReference>
<dbReference type="PIRSF" id="PIRSF000161">
    <property type="entry name" value="DHPR"/>
    <property type="match status" value="1"/>
</dbReference>
<dbReference type="SUPFAM" id="SSF55347">
    <property type="entry name" value="Glyceraldehyde-3-phosphate dehydrogenase-like, C-terminal domain"/>
    <property type="match status" value="1"/>
</dbReference>
<dbReference type="SUPFAM" id="SSF51735">
    <property type="entry name" value="NAD(P)-binding Rossmann-fold domains"/>
    <property type="match status" value="1"/>
</dbReference>
<dbReference type="PROSITE" id="PS01298">
    <property type="entry name" value="DAPB"/>
    <property type="match status" value="1"/>
</dbReference>
<comment type="function">
    <text evidence="1">Catalyzes the conversion of 4-hydroxy-tetrahydrodipicolinate (HTPA) to tetrahydrodipicolinate.</text>
</comment>
<comment type="catalytic activity">
    <reaction evidence="1">
        <text>(S)-2,3,4,5-tetrahydrodipicolinate + NAD(+) + H2O = (2S,4S)-4-hydroxy-2,3,4,5-tetrahydrodipicolinate + NADH + H(+)</text>
        <dbReference type="Rhea" id="RHEA:35323"/>
        <dbReference type="ChEBI" id="CHEBI:15377"/>
        <dbReference type="ChEBI" id="CHEBI:15378"/>
        <dbReference type="ChEBI" id="CHEBI:16845"/>
        <dbReference type="ChEBI" id="CHEBI:57540"/>
        <dbReference type="ChEBI" id="CHEBI:57945"/>
        <dbReference type="ChEBI" id="CHEBI:67139"/>
        <dbReference type="EC" id="1.17.1.8"/>
    </reaction>
</comment>
<comment type="catalytic activity">
    <reaction evidence="1">
        <text>(S)-2,3,4,5-tetrahydrodipicolinate + NADP(+) + H2O = (2S,4S)-4-hydroxy-2,3,4,5-tetrahydrodipicolinate + NADPH + H(+)</text>
        <dbReference type="Rhea" id="RHEA:35331"/>
        <dbReference type="ChEBI" id="CHEBI:15377"/>
        <dbReference type="ChEBI" id="CHEBI:15378"/>
        <dbReference type="ChEBI" id="CHEBI:16845"/>
        <dbReference type="ChEBI" id="CHEBI:57783"/>
        <dbReference type="ChEBI" id="CHEBI:58349"/>
        <dbReference type="ChEBI" id="CHEBI:67139"/>
        <dbReference type="EC" id="1.17.1.8"/>
    </reaction>
</comment>
<comment type="pathway">
    <text evidence="1">Amino-acid biosynthesis; L-lysine biosynthesis via DAP pathway; (S)-tetrahydrodipicolinate from L-aspartate: step 4/4.</text>
</comment>
<comment type="subcellular location">
    <subcellularLocation>
        <location evidence="1">Cytoplasm</location>
    </subcellularLocation>
</comment>
<comment type="similarity">
    <text evidence="1">Belongs to the DapB family.</text>
</comment>
<comment type="caution">
    <text evidence="2">Was originally thought to be a dihydrodipicolinate reductase (DHDPR), catalyzing the conversion of dihydrodipicolinate to tetrahydrodipicolinate. However, it was shown in E.coli that the substrate of the enzymatic reaction is not dihydrodipicolinate (DHDP) but in fact (2S,4S)-4-hydroxy-2,3,4,5-tetrahydrodipicolinic acid (HTPA), the product released by the DapA-catalyzed reaction.</text>
</comment>
<reference key="1">
    <citation type="submission" date="2006-05" db="EMBL/GenBank/DDBJ databases">
        <title>Complete sequence of chromosome of Silicibacter sp. TM1040.</title>
        <authorList>
            <consortium name="US DOE Joint Genome Institute"/>
            <person name="Copeland A."/>
            <person name="Lucas S."/>
            <person name="Lapidus A."/>
            <person name="Barry K."/>
            <person name="Detter J.C."/>
            <person name="Glavina del Rio T."/>
            <person name="Hammon N."/>
            <person name="Israni S."/>
            <person name="Dalin E."/>
            <person name="Tice H."/>
            <person name="Pitluck S."/>
            <person name="Brettin T."/>
            <person name="Bruce D."/>
            <person name="Han C."/>
            <person name="Tapia R."/>
            <person name="Goodwin L."/>
            <person name="Thompson L.S."/>
            <person name="Gilna P."/>
            <person name="Schmutz J."/>
            <person name="Larimer F."/>
            <person name="Land M."/>
            <person name="Hauser L."/>
            <person name="Kyrpides N."/>
            <person name="Kim E."/>
            <person name="Belas R."/>
            <person name="Moran M.A."/>
            <person name="Buchan A."/>
            <person name="Gonzalez J.M."/>
            <person name="Schell M.A."/>
            <person name="Sun F."/>
            <person name="Richardson P."/>
        </authorList>
    </citation>
    <scope>NUCLEOTIDE SEQUENCE [LARGE SCALE GENOMIC DNA]</scope>
    <source>
        <strain>TM1040</strain>
    </source>
</reference>